<evidence type="ECO:0000255" key="1">
    <source>
        <dbReference type="HAMAP-Rule" id="MF_01561"/>
    </source>
</evidence>
<keyword id="KW-0378">Hydrolase</keyword>
<keyword id="KW-0479">Metal-binding</keyword>
<keyword id="KW-0862">Zinc</keyword>
<comment type="cofactor">
    <cofactor evidence="1">
        <name>Zn(2+)</name>
        <dbReference type="ChEBI" id="CHEBI:29105"/>
    </cofactor>
    <text evidence="1">Binds 3 Zn(2+) ions per subunit.</text>
</comment>
<comment type="subunit">
    <text evidence="1">Homotrimer.</text>
</comment>
<comment type="similarity">
    <text evidence="1">Belongs to the PHP family.</text>
</comment>
<feature type="chain" id="PRO_1000069037" description="Probable phosphatase YPA_1419">
    <location>
        <begin position="1"/>
        <end position="245"/>
    </location>
</feature>
<feature type="binding site" evidence="1">
    <location>
        <position position="7"/>
    </location>
    <ligand>
        <name>Zn(2+)</name>
        <dbReference type="ChEBI" id="CHEBI:29105"/>
        <label>1</label>
    </ligand>
</feature>
<feature type="binding site" evidence="1">
    <location>
        <position position="9"/>
    </location>
    <ligand>
        <name>Zn(2+)</name>
        <dbReference type="ChEBI" id="CHEBI:29105"/>
        <label>1</label>
    </ligand>
</feature>
<feature type="binding site" evidence="1">
    <location>
        <position position="15"/>
    </location>
    <ligand>
        <name>Zn(2+)</name>
        <dbReference type="ChEBI" id="CHEBI:29105"/>
        <label>2</label>
    </ligand>
</feature>
<feature type="binding site" evidence="1">
    <location>
        <position position="40"/>
    </location>
    <ligand>
        <name>Zn(2+)</name>
        <dbReference type="ChEBI" id="CHEBI:29105"/>
        <label>2</label>
    </ligand>
</feature>
<feature type="binding site" evidence="1">
    <location>
        <position position="73"/>
    </location>
    <ligand>
        <name>Zn(2+)</name>
        <dbReference type="ChEBI" id="CHEBI:29105"/>
        <label>1</label>
    </ligand>
</feature>
<feature type="binding site" evidence="1">
    <location>
        <position position="73"/>
    </location>
    <ligand>
        <name>Zn(2+)</name>
        <dbReference type="ChEBI" id="CHEBI:29105"/>
        <label>3</label>
    </ligand>
</feature>
<feature type="binding site" evidence="1">
    <location>
        <position position="101"/>
    </location>
    <ligand>
        <name>Zn(2+)</name>
        <dbReference type="ChEBI" id="CHEBI:29105"/>
        <label>3</label>
    </ligand>
</feature>
<feature type="binding site" evidence="1">
    <location>
        <position position="131"/>
    </location>
    <ligand>
        <name>Zn(2+)</name>
        <dbReference type="ChEBI" id="CHEBI:29105"/>
        <label>3</label>
    </ligand>
</feature>
<feature type="binding site" evidence="1">
    <location>
        <position position="192"/>
    </location>
    <ligand>
        <name>Zn(2+)</name>
        <dbReference type="ChEBI" id="CHEBI:29105"/>
        <label>1</label>
    </ligand>
</feature>
<feature type="binding site" evidence="1">
    <location>
        <position position="194"/>
    </location>
    <ligand>
        <name>Zn(2+)</name>
        <dbReference type="ChEBI" id="CHEBI:29105"/>
        <label>2</label>
    </ligand>
</feature>
<name>Y1419_YERPA</name>
<dbReference type="EC" id="3.1.3.-" evidence="1"/>
<dbReference type="EMBL" id="CP000308">
    <property type="protein sequence ID" value="ABG13386.1"/>
    <property type="molecule type" value="Genomic_DNA"/>
</dbReference>
<dbReference type="RefSeq" id="WP_002211221.1">
    <property type="nucleotide sequence ID" value="NZ_CP009906.1"/>
</dbReference>
<dbReference type="SMR" id="Q1C836"/>
<dbReference type="KEGG" id="ypa:YPA_1419"/>
<dbReference type="Proteomes" id="UP000001971">
    <property type="component" value="Chromosome"/>
</dbReference>
<dbReference type="GO" id="GO:0005829">
    <property type="term" value="C:cytosol"/>
    <property type="evidence" value="ECO:0007669"/>
    <property type="project" value="TreeGrafter"/>
</dbReference>
<dbReference type="GO" id="GO:0016791">
    <property type="term" value="F:phosphatase activity"/>
    <property type="evidence" value="ECO:0007669"/>
    <property type="project" value="UniProtKB-UniRule"/>
</dbReference>
<dbReference type="GO" id="GO:0008270">
    <property type="term" value="F:zinc ion binding"/>
    <property type="evidence" value="ECO:0007669"/>
    <property type="project" value="UniProtKB-UniRule"/>
</dbReference>
<dbReference type="GO" id="GO:0071978">
    <property type="term" value="P:bacterial-type flagellum-dependent swarming motility"/>
    <property type="evidence" value="ECO:0007669"/>
    <property type="project" value="TreeGrafter"/>
</dbReference>
<dbReference type="CDD" id="cd07437">
    <property type="entry name" value="PHP_HisPPase_Ycdx_like"/>
    <property type="match status" value="1"/>
</dbReference>
<dbReference type="FunFam" id="3.20.20.140:FF:000008">
    <property type="entry name" value="Probable phosphatase YcdX"/>
    <property type="match status" value="1"/>
</dbReference>
<dbReference type="Gene3D" id="3.20.20.140">
    <property type="entry name" value="Metal-dependent hydrolases"/>
    <property type="match status" value="1"/>
</dbReference>
<dbReference type="HAMAP" id="MF_01561">
    <property type="entry name" value="YcdX_phosphat"/>
    <property type="match status" value="1"/>
</dbReference>
<dbReference type="InterPro" id="IPR023710">
    <property type="entry name" value="Phosphatase_YcdX_put"/>
</dbReference>
<dbReference type="InterPro" id="IPR004013">
    <property type="entry name" value="PHP_dom"/>
</dbReference>
<dbReference type="InterPro" id="IPR050243">
    <property type="entry name" value="PHP_phosphatase"/>
</dbReference>
<dbReference type="InterPro" id="IPR003141">
    <property type="entry name" value="Pol/His_phosphatase_N"/>
</dbReference>
<dbReference type="InterPro" id="IPR016195">
    <property type="entry name" value="Pol/histidinol_Pase-like"/>
</dbReference>
<dbReference type="NCBIfam" id="NF006702">
    <property type="entry name" value="PRK09248.1"/>
    <property type="match status" value="1"/>
</dbReference>
<dbReference type="PANTHER" id="PTHR36928">
    <property type="entry name" value="PHOSPHATASE YCDX-RELATED"/>
    <property type="match status" value="1"/>
</dbReference>
<dbReference type="PANTHER" id="PTHR36928:SF1">
    <property type="entry name" value="PHOSPHATASE YCDX-RELATED"/>
    <property type="match status" value="1"/>
</dbReference>
<dbReference type="Pfam" id="PF02811">
    <property type="entry name" value="PHP"/>
    <property type="match status" value="1"/>
</dbReference>
<dbReference type="SMART" id="SM00481">
    <property type="entry name" value="POLIIIAc"/>
    <property type="match status" value="1"/>
</dbReference>
<dbReference type="SUPFAM" id="SSF89550">
    <property type="entry name" value="PHP domain-like"/>
    <property type="match status" value="1"/>
</dbReference>
<sequence length="245" mass="26930">MYPVDLHMHTVASTHAYSTLHDYIAEAKLKNIKLFAITDHGPDMADAPHYWHFMNMRVWPRLVDGVGILRGIEANIKNLDGDIDCTGPMLDAVDLLIAGFHEPVFPPQDKAANTQAMIATMAQGNVHIISHPGNPKYPVDIPAIAQAAAKYNVALELNNSSFAHSRKGSEANCRAIAAAVRDAGGWLALGSDSHIAYALGIFEHCERIIAEVNFPQERILNVSPRRLLDYLEQRGRPAIPELAEL</sequence>
<gene>
    <name type="ordered locus">YPA_1419</name>
</gene>
<accession>Q1C836</accession>
<reference key="1">
    <citation type="journal article" date="2006" name="J. Bacteriol.">
        <title>Complete genome sequence of Yersinia pestis strains Antiqua and Nepal516: evidence of gene reduction in an emerging pathogen.</title>
        <authorList>
            <person name="Chain P.S.G."/>
            <person name="Hu P."/>
            <person name="Malfatti S.A."/>
            <person name="Radnedge L."/>
            <person name="Larimer F."/>
            <person name="Vergez L.M."/>
            <person name="Worsham P."/>
            <person name="Chu M.C."/>
            <person name="Andersen G.L."/>
        </authorList>
    </citation>
    <scope>NUCLEOTIDE SEQUENCE [LARGE SCALE GENOMIC DNA]</scope>
    <source>
        <strain>Antiqua</strain>
    </source>
</reference>
<organism>
    <name type="scientific">Yersinia pestis bv. Antiqua (strain Antiqua)</name>
    <dbReference type="NCBI Taxonomy" id="360102"/>
    <lineage>
        <taxon>Bacteria</taxon>
        <taxon>Pseudomonadati</taxon>
        <taxon>Pseudomonadota</taxon>
        <taxon>Gammaproteobacteria</taxon>
        <taxon>Enterobacterales</taxon>
        <taxon>Yersiniaceae</taxon>
        <taxon>Yersinia</taxon>
    </lineage>
</organism>
<protein>
    <recommendedName>
        <fullName evidence="1">Probable phosphatase YPA_1419</fullName>
        <ecNumber evidence="1">3.1.3.-</ecNumber>
    </recommendedName>
</protein>
<proteinExistence type="inferred from homology"/>